<reference key="1">
    <citation type="submission" date="2008-06" db="EMBL/GenBank/DDBJ databases">
        <title>Complete sequence of Stenotrophomonas maltophilia R551-3.</title>
        <authorList>
            <consortium name="US DOE Joint Genome Institute"/>
            <person name="Lucas S."/>
            <person name="Copeland A."/>
            <person name="Lapidus A."/>
            <person name="Glavina del Rio T."/>
            <person name="Dalin E."/>
            <person name="Tice H."/>
            <person name="Pitluck S."/>
            <person name="Chain P."/>
            <person name="Malfatti S."/>
            <person name="Shin M."/>
            <person name="Vergez L."/>
            <person name="Lang D."/>
            <person name="Schmutz J."/>
            <person name="Larimer F."/>
            <person name="Land M."/>
            <person name="Hauser L."/>
            <person name="Kyrpides N."/>
            <person name="Mikhailova N."/>
            <person name="Taghavi S."/>
            <person name="Monchy S."/>
            <person name="Newman L."/>
            <person name="Vangronsveld J."/>
            <person name="van der Lelie D."/>
            <person name="Richardson P."/>
        </authorList>
    </citation>
    <scope>NUCLEOTIDE SEQUENCE [LARGE SCALE GENOMIC DNA]</scope>
    <source>
        <strain>R551-3</strain>
    </source>
</reference>
<evidence type="ECO:0000255" key="1">
    <source>
        <dbReference type="HAMAP-Rule" id="MF_00558"/>
    </source>
</evidence>
<dbReference type="EC" id="6.2.1.5" evidence="1"/>
<dbReference type="EMBL" id="CP001111">
    <property type="protein sequence ID" value="ACF52863.1"/>
    <property type="molecule type" value="Genomic_DNA"/>
</dbReference>
<dbReference type="RefSeq" id="WP_004154430.1">
    <property type="nucleotide sequence ID" value="NC_011071.1"/>
</dbReference>
<dbReference type="SMR" id="B4ST72"/>
<dbReference type="STRING" id="391008.Smal_3164"/>
<dbReference type="GeneID" id="93742366"/>
<dbReference type="KEGG" id="smt:Smal_3164"/>
<dbReference type="eggNOG" id="COG0045">
    <property type="taxonomic scope" value="Bacteria"/>
</dbReference>
<dbReference type="HOGENOM" id="CLU_037430_0_2_6"/>
<dbReference type="OrthoDB" id="9802602at2"/>
<dbReference type="UniPathway" id="UPA00223">
    <property type="reaction ID" value="UER00999"/>
</dbReference>
<dbReference type="Proteomes" id="UP000001867">
    <property type="component" value="Chromosome"/>
</dbReference>
<dbReference type="GO" id="GO:0042709">
    <property type="term" value="C:succinate-CoA ligase complex"/>
    <property type="evidence" value="ECO:0007669"/>
    <property type="project" value="TreeGrafter"/>
</dbReference>
<dbReference type="GO" id="GO:0005524">
    <property type="term" value="F:ATP binding"/>
    <property type="evidence" value="ECO:0007669"/>
    <property type="project" value="UniProtKB-UniRule"/>
</dbReference>
<dbReference type="GO" id="GO:0000287">
    <property type="term" value="F:magnesium ion binding"/>
    <property type="evidence" value="ECO:0007669"/>
    <property type="project" value="UniProtKB-UniRule"/>
</dbReference>
<dbReference type="GO" id="GO:0004775">
    <property type="term" value="F:succinate-CoA ligase (ADP-forming) activity"/>
    <property type="evidence" value="ECO:0007669"/>
    <property type="project" value="UniProtKB-UniRule"/>
</dbReference>
<dbReference type="GO" id="GO:0004776">
    <property type="term" value="F:succinate-CoA ligase (GDP-forming) activity"/>
    <property type="evidence" value="ECO:0007669"/>
    <property type="project" value="RHEA"/>
</dbReference>
<dbReference type="GO" id="GO:0006104">
    <property type="term" value="P:succinyl-CoA metabolic process"/>
    <property type="evidence" value="ECO:0007669"/>
    <property type="project" value="TreeGrafter"/>
</dbReference>
<dbReference type="GO" id="GO:0006099">
    <property type="term" value="P:tricarboxylic acid cycle"/>
    <property type="evidence" value="ECO:0007669"/>
    <property type="project" value="UniProtKB-UniRule"/>
</dbReference>
<dbReference type="FunFam" id="3.30.1490.20:FF:000002">
    <property type="entry name" value="Succinate--CoA ligase [ADP-forming] subunit beta"/>
    <property type="match status" value="1"/>
</dbReference>
<dbReference type="FunFam" id="3.30.470.20:FF:000002">
    <property type="entry name" value="Succinate--CoA ligase [ADP-forming] subunit beta"/>
    <property type="match status" value="1"/>
</dbReference>
<dbReference type="FunFam" id="3.40.50.261:FF:000001">
    <property type="entry name" value="Succinate--CoA ligase [ADP-forming] subunit beta"/>
    <property type="match status" value="1"/>
</dbReference>
<dbReference type="Gene3D" id="3.30.1490.20">
    <property type="entry name" value="ATP-grasp fold, A domain"/>
    <property type="match status" value="1"/>
</dbReference>
<dbReference type="Gene3D" id="3.30.470.20">
    <property type="entry name" value="ATP-grasp fold, B domain"/>
    <property type="match status" value="1"/>
</dbReference>
<dbReference type="Gene3D" id="3.40.50.261">
    <property type="entry name" value="Succinyl-CoA synthetase domains"/>
    <property type="match status" value="1"/>
</dbReference>
<dbReference type="HAMAP" id="MF_00558">
    <property type="entry name" value="Succ_CoA_beta"/>
    <property type="match status" value="1"/>
</dbReference>
<dbReference type="InterPro" id="IPR011761">
    <property type="entry name" value="ATP-grasp"/>
</dbReference>
<dbReference type="InterPro" id="IPR013650">
    <property type="entry name" value="ATP-grasp_succ-CoA_synth-type"/>
</dbReference>
<dbReference type="InterPro" id="IPR013815">
    <property type="entry name" value="ATP_grasp_subdomain_1"/>
</dbReference>
<dbReference type="InterPro" id="IPR017866">
    <property type="entry name" value="Succ-CoA_synthase_bsu_CS"/>
</dbReference>
<dbReference type="InterPro" id="IPR005811">
    <property type="entry name" value="SUCC_ACL_C"/>
</dbReference>
<dbReference type="InterPro" id="IPR005809">
    <property type="entry name" value="Succ_CoA_ligase-like_bsu"/>
</dbReference>
<dbReference type="InterPro" id="IPR016102">
    <property type="entry name" value="Succinyl-CoA_synth-like"/>
</dbReference>
<dbReference type="NCBIfam" id="NF001913">
    <property type="entry name" value="PRK00696.1"/>
    <property type="match status" value="1"/>
</dbReference>
<dbReference type="NCBIfam" id="TIGR01016">
    <property type="entry name" value="sucCoAbeta"/>
    <property type="match status" value="1"/>
</dbReference>
<dbReference type="PANTHER" id="PTHR11815:SF10">
    <property type="entry name" value="SUCCINATE--COA LIGASE [GDP-FORMING] SUBUNIT BETA, MITOCHONDRIAL"/>
    <property type="match status" value="1"/>
</dbReference>
<dbReference type="PANTHER" id="PTHR11815">
    <property type="entry name" value="SUCCINYL-COA SYNTHETASE BETA CHAIN"/>
    <property type="match status" value="1"/>
</dbReference>
<dbReference type="Pfam" id="PF08442">
    <property type="entry name" value="ATP-grasp_2"/>
    <property type="match status" value="1"/>
</dbReference>
<dbReference type="Pfam" id="PF00549">
    <property type="entry name" value="Ligase_CoA"/>
    <property type="match status" value="1"/>
</dbReference>
<dbReference type="PIRSF" id="PIRSF001554">
    <property type="entry name" value="SucCS_beta"/>
    <property type="match status" value="1"/>
</dbReference>
<dbReference type="SUPFAM" id="SSF56059">
    <property type="entry name" value="Glutathione synthetase ATP-binding domain-like"/>
    <property type="match status" value="1"/>
</dbReference>
<dbReference type="SUPFAM" id="SSF52210">
    <property type="entry name" value="Succinyl-CoA synthetase domains"/>
    <property type="match status" value="1"/>
</dbReference>
<dbReference type="PROSITE" id="PS50975">
    <property type="entry name" value="ATP_GRASP"/>
    <property type="match status" value="1"/>
</dbReference>
<dbReference type="PROSITE" id="PS01217">
    <property type="entry name" value="SUCCINYL_COA_LIG_3"/>
    <property type="match status" value="1"/>
</dbReference>
<organism>
    <name type="scientific">Stenotrophomonas maltophilia (strain R551-3)</name>
    <dbReference type="NCBI Taxonomy" id="391008"/>
    <lineage>
        <taxon>Bacteria</taxon>
        <taxon>Pseudomonadati</taxon>
        <taxon>Pseudomonadota</taxon>
        <taxon>Gammaproteobacteria</taxon>
        <taxon>Lysobacterales</taxon>
        <taxon>Lysobacteraceae</taxon>
        <taxon>Stenotrophomonas</taxon>
        <taxon>Stenotrophomonas maltophilia group</taxon>
    </lineage>
</organism>
<protein>
    <recommendedName>
        <fullName evidence="1">Succinate--CoA ligase [ADP-forming] subunit beta</fullName>
        <ecNumber evidence="1">6.2.1.5</ecNumber>
    </recommendedName>
    <alternativeName>
        <fullName evidence="1">Succinyl-CoA synthetase subunit beta</fullName>
        <shortName evidence="1">SCS-beta</shortName>
    </alternativeName>
</protein>
<accession>B4ST72</accession>
<comment type="function">
    <text evidence="1">Succinyl-CoA synthetase functions in the citric acid cycle (TCA), coupling the hydrolysis of succinyl-CoA to the synthesis of either ATP or GTP and thus represents the only step of substrate-level phosphorylation in the TCA. The beta subunit provides nucleotide specificity of the enzyme and binds the substrate succinate, while the binding sites for coenzyme A and phosphate are found in the alpha subunit.</text>
</comment>
<comment type="catalytic activity">
    <reaction evidence="1">
        <text>succinate + ATP + CoA = succinyl-CoA + ADP + phosphate</text>
        <dbReference type="Rhea" id="RHEA:17661"/>
        <dbReference type="ChEBI" id="CHEBI:30031"/>
        <dbReference type="ChEBI" id="CHEBI:30616"/>
        <dbReference type="ChEBI" id="CHEBI:43474"/>
        <dbReference type="ChEBI" id="CHEBI:57287"/>
        <dbReference type="ChEBI" id="CHEBI:57292"/>
        <dbReference type="ChEBI" id="CHEBI:456216"/>
        <dbReference type="EC" id="6.2.1.5"/>
    </reaction>
    <physiologicalReaction direction="right-to-left" evidence="1">
        <dbReference type="Rhea" id="RHEA:17663"/>
    </physiologicalReaction>
</comment>
<comment type="catalytic activity">
    <reaction evidence="1">
        <text>GTP + succinate + CoA = succinyl-CoA + GDP + phosphate</text>
        <dbReference type="Rhea" id="RHEA:22120"/>
        <dbReference type="ChEBI" id="CHEBI:30031"/>
        <dbReference type="ChEBI" id="CHEBI:37565"/>
        <dbReference type="ChEBI" id="CHEBI:43474"/>
        <dbReference type="ChEBI" id="CHEBI:57287"/>
        <dbReference type="ChEBI" id="CHEBI:57292"/>
        <dbReference type="ChEBI" id="CHEBI:58189"/>
    </reaction>
    <physiologicalReaction direction="right-to-left" evidence="1">
        <dbReference type="Rhea" id="RHEA:22122"/>
    </physiologicalReaction>
</comment>
<comment type="cofactor">
    <cofactor evidence="1">
        <name>Mg(2+)</name>
        <dbReference type="ChEBI" id="CHEBI:18420"/>
    </cofactor>
    <text evidence="1">Binds 1 Mg(2+) ion per subunit.</text>
</comment>
<comment type="pathway">
    <text evidence="1">Carbohydrate metabolism; tricarboxylic acid cycle; succinate from succinyl-CoA (ligase route): step 1/1.</text>
</comment>
<comment type="subunit">
    <text evidence="1">Heterotetramer of two alpha and two beta subunits.</text>
</comment>
<comment type="similarity">
    <text evidence="1">Belongs to the succinate/malate CoA ligase beta subunit family.</text>
</comment>
<feature type="chain" id="PRO_1000129232" description="Succinate--CoA ligase [ADP-forming] subunit beta">
    <location>
        <begin position="1"/>
        <end position="389"/>
    </location>
</feature>
<feature type="domain" description="ATP-grasp" evidence="1">
    <location>
        <begin position="9"/>
        <end position="244"/>
    </location>
</feature>
<feature type="binding site" evidence="1">
    <location>
        <position position="46"/>
    </location>
    <ligand>
        <name>ATP</name>
        <dbReference type="ChEBI" id="CHEBI:30616"/>
    </ligand>
</feature>
<feature type="binding site" evidence="1">
    <location>
        <begin position="53"/>
        <end position="55"/>
    </location>
    <ligand>
        <name>ATP</name>
        <dbReference type="ChEBI" id="CHEBI:30616"/>
    </ligand>
</feature>
<feature type="binding site" evidence="1">
    <location>
        <position position="102"/>
    </location>
    <ligand>
        <name>ATP</name>
        <dbReference type="ChEBI" id="CHEBI:30616"/>
    </ligand>
</feature>
<feature type="binding site" evidence="1">
    <location>
        <position position="107"/>
    </location>
    <ligand>
        <name>ATP</name>
        <dbReference type="ChEBI" id="CHEBI:30616"/>
    </ligand>
</feature>
<feature type="binding site" evidence="1">
    <location>
        <position position="199"/>
    </location>
    <ligand>
        <name>Mg(2+)</name>
        <dbReference type="ChEBI" id="CHEBI:18420"/>
    </ligand>
</feature>
<feature type="binding site" evidence="1">
    <location>
        <position position="213"/>
    </location>
    <ligand>
        <name>Mg(2+)</name>
        <dbReference type="ChEBI" id="CHEBI:18420"/>
    </ligand>
</feature>
<feature type="binding site" evidence="1">
    <location>
        <position position="264"/>
    </location>
    <ligand>
        <name>substrate</name>
        <note>ligand shared with subunit alpha</note>
    </ligand>
</feature>
<feature type="binding site" evidence="1">
    <location>
        <begin position="321"/>
        <end position="323"/>
    </location>
    <ligand>
        <name>substrate</name>
        <note>ligand shared with subunit alpha</note>
    </ligand>
</feature>
<name>SUCC_STRM5</name>
<proteinExistence type="inferred from homology"/>
<gene>
    <name evidence="1" type="primary">sucC</name>
    <name type="ordered locus">Smal_3164</name>
</gene>
<sequence>MNFHEYQSKQLLAEYGIPVPAGKVAATPDEAVAAANSLGQGPWMVKAQIHAGGRGKAGGVKFCKTTDDVKAAAAKMLGTKMATYQTAGVELPVNLVLVTTAGEIVKELYLSVLVDRGTKTITYIASSEGGVEIEQVAAETPELIHSLNVDFVEGVQGYHGRDFGFKLGLTAKQAGQFASIMVNLYRLFNEKDLALVEINPLAILDDGNLYALDGKFDSDDNAAFRQKALVAMRDKTQEDPTEVIASELDINYVTMDGNIGCMVNGAGLAMATMDVIKLNGGEPANFLDVGGGANKQRVIEAFKLILSSDKVEGIFVNIFGGIVRCDMIAEGIIAAVKEVGVKVPVVVRLEGTNVEEGKQLLRDSGMAIIPADNINDGAKKIVEAVKNAA</sequence>
<keyword id="KW-0067">ATP-binding</keyword>
<keyword id="KW-0436">Ligase</keyword>
<keyword id="KW-0460">Magnesium</keyword>
<keyword id="KW-0479">Metal-binding</keyword>
<keyword id="KW-0547">Nucleotide-binding</keyword>
<keyword id="KW-0816">Tricarboxylic acid cycle</keyword>